<comment type="function">
    <text evidence="1">Component of the CENPA-NAC (nucleosome-associated) complex, a complex that plays a central role in assembly of kinetochore proteins, mitotic progression and chromosome segregation (By similarity). The CENPA-NAC complex recruits the CENPA-CAD (nucleosome distal) complex and may be involved in incorporation of newly synthesized CENPA into centromeres (By similarity). Part of a nucleosome-associated complex that binds specifically to histone H3-containing nucleosomes at the centromere, as opposed to nucleosomes containing CENPA. Component of the heterotetrameric CENP-T-W-S-X complex that binds and supercoils DNA, and plays an important role in kinetochore assembly. CENPW has a fundamental role in kinetochore assembly and function. It is one of the inner kinetochore proteins, with most further proteins binding downstream. Required for normal chromosome organization and normal progress through mitosis (By similarity).</text>
</comment>
<comment type="subunit">
    <text evidence="3">Heterodimer with CENPT; this dimer coassembles with CENPS-CENPX heterodimers at centromeres to form the tetrameric CENP-T-W-S-X complex, which is a subcomplex of the large constitutive centromere-associated network (CCAN, also known as the interphase centromere complex or ICEN). Interacts with NPM1.</text>
</comment>
<comment type="subcellular location">
    <subcellularLocation>
        <location evidence="3">Nucleus</location>
    </subcellularLocation>
    <subcellularLocation>
        <location evidence="3">Chromosome</location>
        <location evidence="3">Centromere</location>
    </subcellularLocation>
    <subcellularLocation>
        <location evidence="3">Chromosome</location>
        <location evidence="3">Centromere</location>
        <location evidence="3">Kinetochore</location>
    </subcellularLocation>
    <subcellularLocation>
        <location evidence="3">Nucleus matrix</location>
    </subcellularLocation>
    <subcellularLocation>
        <location evidence="3">Nucleus</location>
        <location evidence="3">Nucleolus</location>
    </subcellularLocation>
    <text evidence="2">Constitutively localizes to centromeres throughout the cell cycle, and to the inner kinetochore during mitosis.</text>
</comment>
<comment type="similarity">
    <text evidence="4">Belongs to the CENP-W/WIP1 family.</text>
</comment>
<evidence type="ECO:0000250" key="1"/>
<evidence type="ECO:0000250" key="2">
    <source>
        <dbReference type="UniProtKB" id="P0DJH6"/>
    </source>
</evidence>
<evidence type="ECO:0000250" key="3">
    <source>
        <dbReference type="UniProtKB" id="Q5EE01"/>
    </source>
</evidence>
<evidence type="ECO:0000305" key="4"/>
<protein>
    <recommendedName>
        <fullName>Centromere protein W</fullName>
        <shortName>CENP-W</shortName>
    </recommendedName>
    <alternativeName>
        <fullName>Cancer-up-regulated gene 2 protein</fullName>
    </alternativeName>
</protein>
<dbReference type="EMBL" id="BC129114">
    <property type="protein sequence ID" value="AAI29115.1"/>
    <property type="molecule type" value="mRNA"/>
</dbReference>
<dbReference type="RefSeq" id="NP_001233248.1">
    <property type="nucleotide sequence ID" value="NM_001246319.1"/>
</dbReference>
<dbReference type="SMR" id="A1L1L1"/>
<dbReference type="FunCoup" id="A1L1L1">
    <property type="interactions" value="590"/>
</dbReference>
<dbReference type="STRING" id="10116.ENSRNOP00000061737"/>
<dbReference type="PhosphoSitePlus" id="A1L1L1"/>
<dbReference type="PaxDb" id="10116-ENSRNOP00000061737"/>
<dbReference type="Ensembl" id="ENSRNOT00000065677.2">
    <property type="protein sequence ID" value="ENSRNOP00000061737.1"/>
    <property type="gene ID" value="ENSRNOG00000042944.2"/>
</dbReference>
<dbReference type="GeneID" id="689399"/>
<dbReference type="KEGG" id="rno:689399"/>
<dbReference type="UCSC" id="RGD:1593465">
    <property type="organism name" value="rat"/>
</dbReference>
<dbReference type="AGR" id="RGD:1593465"/>
<dbReference type="CTD" id="387103"/>
<dbReference type="RGD" id="1593465">
    <property type="gene designation" value="Cenpw"/>
</dbReference>
<dbReference type="eggNOG" id="ENOG502SGDW">
    <property type="taxonomic scope" value="Eukaryota"/>
</dbReference>
<dbReference type="GeneTree" id="ENSGT00390000010369"/>
<dbReference type="HOGENOM" id="CLU_178644_1_0_1"/>
<dbReference type="InParanoid" id="A1L1L1"/>
<dbReference type="OMA" id="IIKKDHV"/>
<dbReference type="OrthoDB" id="22511at9989"/>
<dbReference type="PhylomeDB" id="A1L1L1"/>
<dbReference type="TreeFam" id="TF343285"/>
<dbReference type="Reactome" id="R-RNO-606279">
    <property type="pathway name" value="Deposition of new CENPA-containing nucleosomes at the centromere"/>
</dbReference>
<dbReference type="PRO" id="PR:A1L1L1"/>
<dbReference type="Proteomes" id="UP000002494">
    <property type="component" value="Chromosome 1"/>
</dbReference>
<dbReference type="Bgee" id="ENSRNOG00000042944">
    <property type="expression patterns" value="Expressed in thymus and 15 other cell types or tissues"/>
</dbReference>
<dbReference type="GO" id="GO:0000775">
    <property type="term" value="C:chromosome, centromeric region"/>
    <property type="evidence" value="ECO:0000250"/>
    <property type="project" value="UniProtKB"/>
</dbReference>
<dbReference type="GO" id="GO:0000939">
    <property type="term" value="C:inner kinetochore"/>
    <property type="evidence" value="ECO:0000266"/>
    <property type="project" value="RGD"/>
</dbReference>
<dbReference type="GO" id="GO:0000776">
    <property type="term" value="C:kinetochore"/>
    <property type="evidence" value="ECO:0000250"/>
    <property type="project" value="UniProtKB"/>
</dbReference>
<dbReference type="GO" id="GO:0016363">
    <property type="term" value="C:nuclear matrix"/>
    <property type="evidence" value="ECO:0007669"/>
    <property type="project" value="UniProtKB-SubCell"/>
</dbReference>
<dbReference type="GO" id="GO:0005730">
    <property type="term" value="C:nucleolus"/>
    <property type="evidence" value="ECO:0007669"/>
    <property type="project" value="UniProtKB-SubCell"/>
</dbReference>
<dbReference type="GO" id="GO:0005654">
    <property type="term" value="C:nucleoplasm"/>
    <property type="evidence" value="ECO:0000318"/>
    <property type="project" value="GO_Central"/>
</dbReference>
<dbReference type="GO" id="GO:0003677">
    <property type="term" value="F:DNA binding"/>
    <property type="evidence" value="ECO:0007669"/>
    <property type="project" value="UniProtKB-KW"/>
</dbReference>
<dbReference type="GO" id="GO:0046982">
    <property type="term" value="F:protein heterodimerization activity"/>
    <property type="evidence" value="ECO:0007669"/>
    <property type="project" value="InterPro"/>
</dbReference>
<dbReference type="GO" id="GO:0051301">
    <property type="term" value="P:cell division"/>
    <property type="evidence" value="ECO:0007669"/>
    <property type="project" value="UniProtKB-KW"/>
</dbReference>
<dbReference type="GO" id="GO:0051276">
    <property type="term" value="P:chromosome organization"/>
    <property type="evidence" value="ECO:0000250"/>
    <property type="project" value="UniProtKB"/>
</dbReference>
<dbReference type="GO" id="GO:0007059">
    <property type="term" value="P:chromosome segregation"/>
    <property type="evidence" value="ECO:0000250"/>
    <property type="project" value="UniProtKB"/>
</dbReference>
<dbReference type="GO" id="GO:0051382">
    <property type="term" value="P:kinetochore assembly"/>
    <property type="evidence" value="ECO:0000250"/>
    <property type="project" value="UniProtKB"/>
</dbReference>
<dbReference type="GO" id="GO:0000278">
    <property type="term" value="P:mitotic cell cycle"/>
    <property type="evidence" value="ECO:0000250"/>
    <property type="project" value="UniProtKB"/>
</dbReference>
<dbReference type="CDD" id="cd13732">
    <property type="entry name" value="HFD_CENP-W"/>
    <property type="match status" value="1"/>
</dbReference>
<dbReference type="FunFam" id="1.10.20.10:FF:000053">
    <property type="entry name" value="Centromere protein W"/>
    <property type="match status" value="1"/>
</dbReference>
<dbReference type="Gene3D" id="1.10.20.10">
    <property type="entry name" value="Histone, subunit A"/>
    <property type="match status" value="1"/>
</dbReference>
<dbReference type="InterPro" id="IPR028847">
    <property type="entry name" value="CENP-W"/>
</dbReference>
<dbReference type="InterPro" id="IPR052484">
    <property type="entry name" value="CENP-W/WIP1"/>
</dbReference>
<dbReference type="InterPro" id="IPR009072">
    <property type="entry name" value="Histone-fold"/>
</dbReference>
<dbReference type="PANTHER" id="PTHR34832">
    <property type="entry name" value="CENTROMERE PROTEIN W"/>
    <property type="match status" value="1"/>
</dbReference>
<dbReference type="PANTHER" id="PTHR34832:SF1">
    <property type="entry name" value="CENTROMERE PROTEIN W"/>
    <property type="match status" value="1"/>
</dbReference>
<dbReference type="Pfam" id="PF15510">
    <property type="entry name" value="CENP-W"/>
    <property type="match status" value="1"/>
</dbReference>
<dbReference type="SUPFAM" id="SSF47113">
    <property type="entry name" value="Histone-fold"/>
    <property type="match status" value="1"/>
</dbReference>
<keyword id="KW-0131">Cell cycle</keyword>
<keyword id="KW-0132">Cell division</keyword>
<keyword id="KW-0137">Centromere</keyword>
<keyword id="KW-0158">Chromosome</keyword>
<keyword id="KW-0238">DNA-binding</keyword>
<keyword id="KW-0995">Kinetochore</keyword>
<keyword id="KW-0498">Mitosis</keyword>
<keyword id="KW-0539">Nucleus</keyword>
<keyword id="KW-1185">Reference proteome</keyword>
<keyword id="KW-0043">Tumor suppressor</keyword>
<sequence>MVLSTTVCRRIRRKAPCAFLKRTLKQKKPRLSLEKRCDLLIHLNCLLFVQKLAEESRTNACESKSGVIKKDHVQAAAKVILKKSRG</sequence>
<organism>
    <name type="scientific">Rattus norvegicus</name>
    <name type="common">Rat</name>
    <dbReference type="NCBI Taxonomy" id="10116"/>
    <lineage>
        <taxon>Eukaryota</taxon>
        <taxon>Metazoa</taxon>
        <taxon>Chordata</taxon>
        <taxon>Craniata</taxon>
        <taxon>Vertebrata</taxon>
        <taxon>Euteleostomi</taxon>
        <taxon>Mammalia</taxon>
        <taxon>Eutheria</taxon>
        <taxon>Euarchontoglires</taxon>
        <taxon>Glires</taxon>
        <taxon>Rodentia</taxon>
        <taxon>Myomorpha</taxon>
        <taxon>Muroidea</taxon>
        <taxon>Muridae</taxon>
        <taxon>Murinae</taxon>
        <taxon>Rattus</taxon>
    </lineage>
</organism>
<proteinExistence type="inferred from homology"/>
<feature type="chain" id="PRO_0000311185" description="Centromere protein W">
    <location>
        <begin position="1"/>
        <end position="86"/>
    </location>
</feature>
<accession>A1L1L1</accession>
<name>CENPW_RAT</name>
<gene>
    <name type="primary">Cenpw</name>
    <name type="synonym">Cug2</name>
</gene>
<reference key="1">
    <citation type="journal article" date="2004" name="Genome Res.">
        <title>The status, quality, and expansion of the NIH full-length cDNA project: the Mammalian Gene Collection (MGC).</title>
        <authorList>
            <consortium name="The MGC Project Team"/>
        </authorList>
    </citation>
    <scope>NUCLEOTIDE SEQUENCE [LARGE SCALE MRNA]</scope>
    <source>
        <tissue>Testis</tissue>
    </source>
</reference>